<dbReference type="EC" id="2.7.8.-" evidence="1 3"/>
<dbReference type="EMBL" id="M87645">
    <property type="protein sequence ID" value="AAA22578.1"/>
    <property type="molecule type" value="Genomic_DNA"/>
</dbReference>
<dbReference type="EMBL" id="AL009126">
    <property type="protein sequence ID" value="CAB15582.1"/>
    <property type="molecule type" value="Genomic_DNA"/>
</dbReference>
<dbReference type="EMBL" id="Z22516">
    <property type="protein sequence ID" value="CAA80239.1"/>
    <property type="molecule type" value="Genomic_DNA"/>
</dbReference>
<dbReference type="PIR" id="A47679">
    <property type="entry name" value="A47679"/>
</dbReference>
<dbReference type="RefSeq" id="NP_391445.1">
    <property type="nucleotide sequence ID" value="NC_000964.3"/>
</dbReference>
<dbReference type="RefSeq" id="WP_003227949.1">
    <property type="nucleotide sequence ID" value="NZ_OZ025638.1"/>
</dbReference>
<dbReference type="PDB" id="6UF6">
    <property type="method" value="X-ray"/>
    <property type="resolution" value="2.20 A"/>
    <property type="chains" value="A=61-306"/>
</dbReference>
<dbReference type="PDBsum" id="6UF6"/>
<dbReference type="SMR" id="Q02115"/>
<dbReference type="FunCoup" id="Q02115">
    <property type="interactions" value="59"/>
</dbReference>
<dbReference type="STRING" id="224308.BSU35650"/>
<dbReference type="jPOST" id="Q02115"/>
<dbReference type="PaxDb" id="224308-BSU35650"/>
<dbReference type="DNASU" id="936787"/>
<dbReference type="EnsemblBacteria" id="CAB15582">
    <property type="protein sequence ID" value="CAB15582"/>
    <property type="gene ID" value="BSU_35650"/>
</dbReference>
<dbReference type="GeneID" id="936787"/>
<dbReference type="KEGG" id="bsu:BSU35650"/>
<dbReference type="PATRIC" id="fig|224308.179.peg.3856"/>
<dbReference type="eggNOG" id="COG1316">
    <property type="taxonomic scope" value="Bacteria"/>
</dbReference>
<dbReference type="InParanoid" id="Q02115"/>
<dbReference type="OrthoDB" id="27330at2"/>
<dbReference type="PhylomeDB" id="Q02115"/>
<dbReference type="BioCyc" id="BSUB:BSU35650-MONOMER"/>
<dbReference type="BioCyc" id="MetaCyc:BSU35650-MONOMER"/>
<dbReference type="Proteomes" id="UP000001570">
    <property type="component" value="Chromosome"/>
</dbReference>
<dbReference type="GO" id="GO:0045121">
    <property type="term" value="C:membrane raft"/>
    <property type="evidence" value="ECO:0007669"/>
    <property type="project" value="UniProtKB-SubCell"/>
</dbReference>
<dbReference type="GO" id="GO:0005886">
    <property type="term" value="C:plasma membrane"/>
    <property type="evidence" value="ECO:0007669"/>
    <property type="project" value="UniProtKB-SubCell"/>
</dbReference>
<dbReference type="GO" id="GO:0016780">
    <property type="term" value="F:phosphotransferase activity, for other substituted phosphate groups"/>
    <property type="evidence" value="ECO:0007669"/>
    <property type="project" value="UniProtKB-UniRule"/>
</dbReference>
<dbReference type="GO" id="GO:0070726">
    <property type="term" value="P:cell wall assembly"/>
    <property type="evidence" value="ECO:0007669"/>
    <property type="project" value="UniProtKB-UniRule"/>
</dbReference>
<dbReference type="Gene3D" id="3.40.630.190">
    <property type="entry name" value="LCP protein"/>
    <property type="match status" value="1"/>
</dbReference>
<dbReference type="HAMAP" id="MF_01140">
    <property type="entry name" value="TagU_transferase"/>
    <property type="match status" value="1"/>
</dbReference>
<dbReference type="InterPro" id="IPR050922">
    <property type="entry name" value="LytR/CpsA/Psr_CW_biosynth"/>
</dbReference>
<dbReference type="InterPro" id="IPR004474">
    <property type="entry name" value="LytR_CpsA_psr"/>
</dbReference>
<dbReference type="InterPro" id="IPR023734">
    <property type="entry name" value="TagU"/>
</dbReference>
<dbReference type="NCBIfam" id="TIGR00350">
    <property type="entry name" value="lytR_cpsA_psr"/>
    <property type="match status" value="1"/>
</dbReference>
<dbReference type="NCBIfam" id="NF006897">
    <property type="entry name" value="PRK09379.1"/>
    <property type="match status" value="1"/>
</dbReference>
<dbReference type="PANTHER" id="PTHR33392">
    <property type="entry name" value="POLYISOPRENYL-TEICHOIC ACID--PEPTIDOGLYCAN TEICHOIC ACID TRANSFERASE TAGU"/>
    <property type="match status" value="1"/>
</dbReference>
<dbReference type="PANTHER" id="PTHR33392:SF6">
    <property type="entry name" value="POLYISOPRENYL-TEICHOIC ACID--PEPTIDOGLYCAN TEICHOIC ACID TRANSFERASE TAGU"/>
    <property type="match status" value="1"/>
</dbReference>
<dbReference type="Pfam" id="PF03816">
    <property type="entry name" value="LytR_cpsA_psr"/>
    <property type="match status" value="1"/>
</dbReference>
<accession>Q02115</accession>
<proteinExistence type="evidence at protein level"/>
<comment type="function">
    <text evidence="1 3">May catalyze the final step in cell wall teichoic acid biosynthesis, the transfer of the anionic cell wall polymers (APs) from their lipid-linked precursor to the cell wall peptidoglycan (PG).</text>
</comment>
<comment type="pathway">
    <text evidence="1 3">Cell wall biogenesis.</text>
</comment>
<comment type="subunit">
    <text evidence="3 4">Interacts with MreB (PubMed:21964069). Interacts with FloT (PubMed:23651456).</text>
</comment>
<comment type="subcellular location">
    <subcellularLocation>
        <location evidence="1 4 7">Cell membrane</location>
        <topology evidence="1 7">Single-pass type II membrane protein</topology>
    </subcellularLocation>
    <subcellularLocation>
        <location evidence="4">Membrane raft</location>
        <topology>Single-pass type II membrane protein</topology>
    </subcellularLocation>
    <text evidence="4">Present in detergent-resistant membrane (DRM) fractions that may be equivalent to eukaryotic membrane rafts; these rafts include proteins involved in signaling, molecule trafficking and protein secretion.</text>
</comment>
<comment type="disruption phenotype">
    <text evidence="2 3">Single mutant has no effect on cell growth or morphology under normal growth conditions. Triple disruption of tagTUV genes is not viable (PubMed:21964069). Cells lacking this gene display a considerably increased transcription frequency of lytR and lytABC operon expression (PubMed:1357079).</text>
</comment>
<comment type="similarity">
    <text evidence="1 7">Belongs to the LytR/CpsA/Psr (LCP) family.</text>
</comment>
<comment type="caution">
    <text evidence="8">Was originally thought to be involved in transcriptional regulation.</text>
</comment>
<comment type="caution">
    <text evidence="7">This protein is unrelated to LytR from S.aureus, which is part of a two-component regulatory system that, together with LytS, is involved in autolysis and cell wall metabolism. The B.subtilis ortholog of S.aureus LytR is LytT (AC P94514).</text>
</comment>
<feature type="chain" id="PRO_0000218498" description="Polyisoprenyl-teichoic acid--peptidoglycan teichoic acid transferase TagU">
    <location>
        <begin position="1"/>
        <end position="306"/>
    </location>
</feature>
<feature type="topological domain" description="Cytoplasmic" evidence="1 7">
    <location>
        <begin position="1"/>
        <end position="11"/>
    </location>
</feature>
<feature type="transmembrane region" description="Helical; Signal-anchor for type II membrane protein" evidence="1">
    <location>
        <begin position="12"/>
        <end position="32"/>
    </location>
</feature>
<feature type="topological domain" description="Extracellular" evidence="1 7">
    <location>
        <begin position="33"/>
        <end position="306"/>
    </location>
</feature>
<feature type="mutagenesis site" description="Does not complement the tagTUV deletion mutant." evidence="3">
    <original>D</original>
    <variation>A</variation>
    <location>
        <position position="75"/>
    </location>
</feature>
<feature type="mutagenesis site" description="Does not complement the tagTUV deletion mutant." evidence="3">
    <original>R</original>
    <variation>A</variation>
    <location>
        <position position="83"/>
    </location>
</feature>
<feature type="mutagenesis site" description="Does not complement the tagTUV deletion mutant." evidence="3">
    <original>D</original>
    <variation>A</variation>
    <location>
        <position position="85"/>
    </location>
</feature>
<feature type="mutagenesis site" description="Does not complement the tagTUV deletion mutant." evidence="3">
    <original>T</original>
    <variation>F</variation>
    <location>
        <position position="86"/>
    </location>
</feature>
<feature type="mutagenesis site" description="Does not complement the tagTUV deletion mutant." evidence="3">
    <original>T</original>
    <variation>F</variation>
    <location>
        <position position="197"/>
    </location>
</feature>
<feature type="strand" evidence="9">
    <location>
        <begin position="67"/>
        <end position="74"/>
    </location>
</feature>
<feature type="strand" evidence="9">
    <location>
        <begin position="86"/>
        <end position="93"/>
    </location>
</feature>
<feature type="turn" evidence="9">
    <location>
        <begin position="94"/>
        <end position="97"/>
    </location>
</feature>
<feature type="strand" evidence="9">
    <location>
        <begin position="98"/>
        <end position="104"/>
    </location>
</feature>
<feature type="strand" evidence="9">
    <location>
        <begin position="108"/>
        <end position="112"/>
    </location>
</feature>
<feature type="turn" evidence="9">
    <location>
        <begin position="113"/>
        <end position="116"/>
    </location>
</feature>
<feature type="strand" evidence="9">
    <location>
        <begin position="117"/>
        <end position="120"/>
    </location>
</feature>
<feature type="helix" evidence="9">
    <location>
        <begin position="121"/>
        <end position="123"/>
    </location>
</feature>
<feature type="helix" evidence="9">
    <location>
        <begin position="124"/>
        <end position="141"/>
    </location>
</feature>
<feature type="strand" evidence="9">
    <location>
        <begin position="147"/>
        <end position="152"/>
    </location>
</feature>
<feature type="helix" evidence="9">
    <location>
        <begin position="153"/>
        <end position="155"/>
    </location>
</feature>
<feature type="helix" evidence="9">
    <location>
        <begin position="156"/>
        <end position="162"/>
    </location>
</feature>
<feature type="strand" evidence="9">
    <location>
        <begin position="166"/>
        <end position="172"/>
    </location>
</feature>
<feature type="strand" evidence="9">
    <location>
        <begin position="174"/>
        <end position="176"/>
    </location>
</feature>
<feature type="strand" evidence="9">
    <location>
        <begin position="179"/>
        <end position="181"/>
    </location>
</feature>
<feature type="strand" evidence="9">
    <location>
        <begin position="183"/>
        <end position="188"/>
    </location>
</feature>
<feature type="helix" evidence="9">
    <location>
        <begin position="190"/>
        <end position="198"/>
    </location>
</feature>
<feature type="turn" evidence="9">
    <location>
        <begin position="204"/>
        <end position="206"/>
    </location>
</feature>
<feature type="helix" evidence="9">
    <location>
        <begin position="207"/>
        <end position="226"/>
    </location>
</feature>
<feature type="helix" evidence="9">
    <location>
        <begin position="231"/>
        <end position="241"/>
    </location>
</feature>
<feature type="turn" evidence="9">
    <location>
        <begin position="242"/>
        <end position="244"/>
    </location>
</feature>
<feature type="strand" evidence="9">
    <location>
        <begin position="245"/>
        <end position="247"/>
    </location>
</feature>
<feature type="helix" evidence="9">
    <location>
        <begin position="251"/>
        <end position="256"/>
    </location>
</feature>
<feature type="strand" evidence="9">
    <location>
        <begin position="268"/>
        <end position="271"/>
    </location>
</feature>
<feature type="strand" evidence="9">
    <location>
        <begin position="275"/>
        <end position="279"/>
    </location>
</feature>
<feature type="strand" evidence="9">
    <location>
        <begin position="284"/>
        <end position="288"/>
    </location>
</feature>
<feature type="helix" evidence="9">
    <location>
        <begin position="290"/>
        <end position="304"/>
    </location>
</feature>
<keyword id="KW-0002">3D-structure</keyword>
<keyword id="KW-1003">Cell membrane</keyword>
<keyword id="KW-0961">Cell wall biogenesis/degradation</keyword>
<keyword id="KW-0472">Membrane</keyword>
<keyword id="KW-1185">Reference proteome</keyword>
<keyword id="KW-0735">Signal-anchor</keyword>
<keyword id="KW-0808">Transferase</keyword>
<keyword id="KW-0812">Transmembrane</keyword>
<keyword id="KW-1133">Transmembrane helix</keyword>
<name>TAGU_BACSU</name>
<protein>
    <recommendedName>
        <fullName evidence="1 7">Polyisoprenyl-teichoic acid--peptidoglycan teichoic acid transferase TagU</fullName>
        <ecNumber evidence="1 3">2.7.8.-</ecNumber>
    </recommendedName>
    <alternativeName>
        <fullName>Membrane-bound protein LytR</fullName>
    </alternativeName>
</protein>
<evidence type="ECO:0000255" key="1">
    <source>
        <dbReference type="HAMAP-Rule" id="MF_01140"/>
    </source>
</evidence>
<evidence type="ECO:0000269" key="2">
    <source>
    </source>
</evidence>
<evidence type="ECO:0000269" key="3">
    <source>
    </source>
</evidence>
<evidence type="ECO:0000269" key="4">
    <source>
    </source>
</evidence>
<evidence type="ECO:0000303" key="5">
    <source>
    </source>
</evidence>
<evidence type="ECO:0000303" key="6">
    <source>
    </source>
</evidence>
<evidence type="ECO:0000305" key="7"/>
<evidence type="ECO:0000305" key="8">
    <source>
    </source>
</evidence>
<evidence type="ECO:0007829" key="9">
    <source>
        <dbReference type="PDB" id="6UF6"/>
    </source>
</evidence>
<organism>
    <name type="scientific">Bacillus subtilis (strain 168)</name>
    <dbReference type="NCBI Taxonomy" id="224308"/>
    <lineage>
        <taxon>Bacteria</taxon>
        <taxon>Bacillati</taxon>
        <taxon>Bacillota</taxon>
        <taxon>Bacilli</taxon>
        <taxon>Bacillales</taxon>
        <taxon>Bacillaceae</taxon>
        <taxon>Bacillus</taxon>
    </lineage>
</organism>
<reference key="1">
    <citation type="journal article" date="1992" name="J. Gen. Microbiol.">
        <title>Sequencing and analysis of the Bacillus subtilis lytRABC divergon: a regulatory unit encompassing the structural genes of the N-acetylmuramoyl-L-alanine amidase and its modifier.</title>
        <authorList>
            <person name="Lazarevic V."/>
            <person name="Margot P."/>
            <person name="Soldo B."/>
            <person name="Karamata D."/>
        </authorList>
    </citation>
    <scope>NUCLEOTIDE SEQUENCE [GENOMIC DNA]</scope>
    <scope>DISRUPTION PHENOTYPE</scope>
    <source>
        <strain>168</strain>
    </source>
</reference>
<reference key="2">
    <citation type="journal article" date="1997" name="Nature">
        <title>The complete genome sequence of the Gram-positive bacterium Bacillus subtilis.</title>
        <authorList>
            <person name="Kunst F."/>
            <person name="Ogasawara N."/>
            <person name="Moszer I."/>
            <person name="Albertini A.M."/>
            <person name="Alloni G."/>
            <person name="Azevedo V."/>
            <person name="Bertero M.G."/>
            <person name="Bessieres P."/>
            <person name="Bolotin A."/>
            <person name="Borchert S."/>
            <person name="Borriss R."/>
            <person name="Boursier L."/>
            <person name="Brans A."/>
            <person name="Braun M."/>
            <person name="Brignell S.C."/>
            <person name="Bron S."/>
            <person name="Brouillet S."/>
            <person name="Bruschi C.V."/>
            <person name="Caldwell B."/>
            <person name="Capuano V."/>
            <person name="Carter N.M."/>
            <person name="Choi S.-K."/>
            <person name="Codani J.-J."/>
            <person name="Connerton I.F."/>
            <person name="Cummings N.J."/>
            <person name="Daniel R.A."/>
            <person name="Denizot F."/>
            <person name="Devine K.M."/>
            <person name="Duesterhoeft A."/>
            <person name="Ehrlich S.D."/>
            <person name="Emmerson P.T."/>
            <person name="Entian K.-D."/>
            <person name="Errington J."/>
            <person name="Fabret C."/>
            <person name="Ferrari E."/>
            <person name="Foulger D."/>
            <person name="Fritz C."/>
            <person name="Fujita M."/>
            <person name="Fujita Y."/>
            <person name="Fuma S."/>
            <person name="Galizzi A."/>
            <person name="Galleron N."/>
            <person name="Ghim S.-Y."/>
            <person name="Glaser P."/>
            <person name="Goffeau A."/>
            <person name="Golightly E.J."/>
            <person name="Grandi G."/>
            <person name="Guiseppi G."/>
            <person name="Guy B.J."/>
            <person name="Haga K."/>
            <person name="Haiech J."/>
            <person name="Harwood C.R."/>
            <person name="Henaut A."/>
            <person name="Hilbert H."/>
            <person name="Holsappel S."/>
            <person name="Hosono S."/>
            <person name="Hullo M.-F."/>
            <person name="Itaya M."/>
            <person name="Jones L.-M."/>
            <person name="Joris B."/>
            <person name="Karamata D."/>
            <person name="Kasahara Y."/>
            <person name="Klaerr-Blanchard M."/>
            <person name="Klein C."/>
            <person name="Kobayashi Y."/>
            <person name="Koetter P."/>
            <person name="Koningstein G."/>
            <person name="Krogh S."/>
            <person name="Kumano M."/>
            <person name="Kurita K."/>
            <person name="Lapidus A."/>
            <person name="Lardinois S."/>
            <person name="Lauber J."/>
            <person name="Lazarevic V."/>
            <person name="Lee S.-M."/>
            <person name="Levine A."/>
            <person name="Liu H."/>
            <person name="Masuda S."/>
            <person name="Mauel C."/>
            <person name="Medigue C."/>
            <person name="Medina N."/>
            <person name="Mellado R.P."/>
            <person name="Mizuno M."/>
            <person name="Moestl D."/>
            <person name="Nakai S."/>
            <person name="Noback M."/>
            <person name="Noone D."/>
            <person name="O'Reilly M."/>
            <person name="Ogawa K."/>
            <person name="Ogiwara A."/>
            <person name="Oudega B."/>
            <person name="Park S.-H."/>
            <person name="Parro V."/>
            <person name="Pohl T.M."/>
            <person name="Portetelle D."/>
            <person name="Porwollik S."/>
            <person name="Prescott A.M."/>
            <person name="Presecan E."/>
            <person name="Pujic P."/>
            <person name="Purnelle B."/>
            <person name="Rapoport G."/>
            <person name="Rey M."/>
            <person name="Reynolds S."/>
            <person name="Rieger M."/>
            <person name="Rivolta C."/>
            <person name="Rocha E."/>
            <person name="Roche B."/>
            <person name="Rose M."/>
            <person name="Sadaie Y."/>
            <person name="Sato T."/>
            <person name="Scanlan E."/>
            <person name="Schleich S."/>
            <person name="Schroeter R."/>
            <person name="Scoffone F."/>
            <person name="Sekiguchi J."/>
            <person name="Sekowska A."/>
            <person name="Seror S.J."/>
            <person name="Serror P."/>
            <person name="Shin B.-S."/>
            <person name="Soldo B."/>
            <person name="Sorokin A."/>
            <person name="Tacconi E."/>
            <person name="Takagi T."/>
            <person name="Takahashi H."/>
            <person name="Takemaru K."/>
            <person name="Takeuchi M."/>
            <person name="Tamakoshi A."/>
            <person name="Tanaka T."/>
            <person name="Terpstra P."/>
            <person name="Tognoni A."/>
            <person name="Tosato V."/>
            <person name="Uchiyama S."/>
            <person name="Vandenbol M."/>
            <person name="Vannier F."/>
            <person name="Vassarotti A."/>
            <person name="Viari A."/>
            <person name="Wambutt R."/>
            <person name="Wedler E."/>
            <person name="Wedler H."/>
            <person name="Weitzenegger T."/>
            <person name="Winters P."/>
            <person name="Wipat A."/>
            <person name="Yamamoto H."/>
            <person name="Yamane K."/>
            <person name="Yasumoto K."/>
            <person name="Yata K."/>
            <person name="Yoshida K."/>
            <person name="Yoshikawa H.-F."/>
            <person name="Zumstein E."/>
            <person name="Yoshikawa H."/>
            <person name="Danchin A."/>
        </authorList>
    </citation>
    <scope>NUCLEOTIDE SEQUENCE [LARGE SCALE GENOMIC DNA]</scope>
    <source>
        <strain>168</strain>
    </source>
</reference>
<reference key="3">
    <citation type="journal article" date="1993" name="J. Gen. Microbiol.">
        <title>Sequencing and analysis of the divergon comprising gtaB, the structural gene of UDP-glucose pyrophosphorylase of Bacillus subtilis 168.</title>
        <authorList>
            <person name="Soldo B."/>
            <person name="Lazarevic V."/>
            <person name="Margot P."/>
            <person name="Karamata D."/>
        </authorList>
    </citation>
    <scope>NUCLEOTIDE SEQUENCE [GENOMIC DNA] OF 257-306</scope>
    <source>
        <strain>168</strain>
    </source>
</reference>
<reference key="4">
    <citation type="journal article" date="2011" name="EMBO J.">
        <title>A widespread family of bacterial cell wall assembly proteins.</title>
        <authorList>
            <person name="Kawai Y."/>
            <person name="Marles-Wright J."/>
            <person name="Cleverley R.M."/>
            <person name="Emmins R."/>
            <person name="Ishikawa S."/>
            <person name="Kuwano M."/>
            <person name="Heinz N."/>
            <person name="Bui N.K."/>
            <person name="Hoyland C.N."/>
            <person name="Ogasawara N."/>
            <person name="Lewis R.J."/>
            <person name="Vollmer W."/>
            <person name="Daniel R.A."/>
            <person name="Errington J."/>
        </authorList>
    </citation>
    <scope>FUNCTION</scope>
    <scope>PATHWAY</scope>
    <scope>INTERACTION WITH MREB</scope>
    <scope>DISRUPTION PHENOTYPE</scope>
    <scope>MUTAGENESIS OF ASP-75; ARG-83; ASP-85; THR-86 AND THR-197</scope>
</reference>
<reference key="5">
    <citation type="journal article" date="2013" name="Mol. Microbiol.">
        <title>Flotillins functionally organize the bacterial membrane.</title>
        <authorList>
            <person name="Bach J.N."/>
            <person name="Bramkamp M."/>
        </authorList>
    </citation>
    <scope>INTERACTION WITH FLOT</scope>
    <scope>SUBCELLULAR LOCATION</scope>
    <source>
        <strain>168</strain>
    </source>
</reference>
<sequence>MRNERRKKKKTLLLTILTIIGLLVLGTGGYAYYLWHKAASTVASIHESIDKSKKRDKEVSINKKDPFSVLIMGVDERDGDKGRADTLIYMTVNPKTNTTDMVSIPRDTYTKIIGKGTMDKINHSYAFGGTQMTVDTVENFLDVPVDYFVKVNMESFRDVVDTLGGITVNSTFAFSYDGYSFGKGEITLNGKEALAYTRMRKEDPRGDFGRQDRQRQVIQGIINKGANISSITKFGDMFKVVENNVKTNLTFDNMWDIQSDYKGARKHIKQHELKGTGTKINGIYYYQADESALSDITKELKESLEK</sequence>
<gene>
    <name evidence="1 6" type="primary">tagU</name>
    <name evidence="5" type="synonym">lytR</name>
    <name type="ordered locus">BSU35650</name>
</gene>